<organism>
    <name type="scientific">Craspedocephalus borneensis</name>
    <name type="common">Borneo pit viper</name>
    <name type="synonym">Trimeresurus borneensis</name>
    <dbReference type="NCBI Taxonomy" id="3147914"/>
    <lineage>
        <taxon>Eukaryota</taxon>
        <taxon>Metazoa</taxon>
        <taxon>Chordata</taxon>
        <taxon>Craniata</taxon>
        <taxon>Vertebrata</taxon>
        <taxon>Euteleostomi</taxon>
        <taxon>Lepidosauria</taxon>
        <taxon>Squamata</taxon>
        <taxon>Bifurcata</taxon>
        <taxon>Unidentata</taxon>
        <taxon>Episquamata</taxon>
        <taxon>Toxicofera</taxon>
        <taxon>Serpentes</taxon>
        <taxon>Colubroidea</taxon>
        <taxon>Viperidae</taxon>
        <taxon>Crotalinae</taxon>
        <taxon>Craspedocephalus</taxon>
    </lineage>
</organism>
<dbReference type="EMBL" id="AY355177">
    <property type="protein sequence ID" value="AAR14171.1"/>
    <property type="molecule type" value="mRNA"/>
</dbReference>
<dbReference type="SMR" id="Q2YHJ4"/>
<dbReference type="GO" id="GO:0005576">
    <property type="term" value="C:extracellular region"/>
    <property type="evidence" value="ECO:0007669"/>
    <property type="project" value="UniProtKB-SubCell"/>
</dbReference>
<dbReference type="GO" id="GO:0005509">
    <property type="term" value="F:calcium ion binding"/>
    <property type="evidence" value="ECO:0007669"/>
    <property type="project" value="InterPro"/>
</dbReference>
<dbReference type="GO" id="GO:0047498">
    <property type="term" value="F:calcium-dependent phospholipase A2 activity"/>
    <property type="evidence" value="ECO:0007669"/>
    <property type="project" value="TreeGrafter"/>
</dbReference>
<dbReference type="GO" id="GO:0005543">
    <property type="term" value="F:phospholipid binding"/>
    <property type="evidence" value="ECO:0007669"/>
    <property type="project" value="TreeGrafter"/>
</dbReference>
<dbReference type="GO" id="GO:0090729">
    <property type="term" value="F:toxin activity"/>
    <property type="evidence" value="ECO:0007669"/>
    <property type="project" value="UniProtKB-KW"/>
</dbReference>
<dbReference type="GO" id="GO:0050482">
    <property type="term" value="P:arachidonate secretion"/>
    <property type="evidence" value="ECO:0007669"/>
    <property type="project" value="InterPro"/>
</dbReference>
<dbReference type="GO" id="GO:0016042">
    <property type="term" value="P:lipid catabolic process"/>
    <property type="evidence" value="ECO:0007669"/>
    <property type="project" value="InterPro"/>
</dbReference>
<dbReference type="GO" id="GO:0006644">
    <property type="term" value="P:phospholipid metabolic process"/>
    <property type="evidence" value="ECO:0007669"/>
    <property type="project" value="InterPro"/>
</dbReference>
<dbReference type="CDD" id="cd00125">
    <property type="entry name" value="PLA2c"/>
    <property type="match status" value="1"/>
</dbReference>
<dbReference type="FunFam" id="1.20.90.10:FF:000001">
    <property type="entry name" value="Basic phospholipase A2 homolog"/>
    <property type="match status" value="1"/>
</dbReference>
<dbReference type="Gene3D" id="1.20.90.10">
    <property type="entry name" value="Phospholipase A2 domain"/>
    <property type="match status" value="1"/>
</dbReference>
<dbReference type="InterPro" id="IPR001211">
    <property type="entry name" value="PLipase_A2"/>
</dbReference>
<dbReference type="InterPro" id="IPR033112">
    <property type="entry name" value="PLipase_A2_Asp_AS"/>
</dbReference>
<dbReference type="InterPro" id="IPR016090">
    <property type="entry name" value="PLipase_A2_dom"/>
</dbReference>
<dbReference type="InterPro" id="IPR036444">
    <property type="entry name" value="PLipase_A2_dom_sf"/>
</dbReference>
<dbReference type="InterPro" id="IPR033113">
    <property type="entry name" value="PLipase_A2_His_AS"/>
</dbReference>
<dbReference type="PANTHER" id="PTHR11716:SF101">
    <property type="entry name" value="BASIC PHOSPHOLIPASE A2 PA-11-LIKE"/>
    <property type="match status" value="1"/>
</dbReference>
<dbReference type="PANTHER" id="PTHR11716">
    <property type="entry name" value="PHOSPHOLIPASE A2 FAMILY MEMBER"/>
    <property type="match status" value="1"/>
</dbReference>
<dbReference type="Pfam" id="PF00068">
    <property type="entry name" value="Phospholip_A2_1"/>
    <property type="match status" value="1"/>
</dbReference>
<dbReference type="PRINTS" id="PR00389">
    <property type="entry name" value="PHPHLIPASEA2"/>
</dbReference>
<dbReference type="SMART" id="SM00085">
    <property type="entry name" value="PA2c"/>
    <property type="match status" value="1"/>
</dbReference>
<dbReference type="SUPFAM" id="SSF48619">
    <property type="entry name" value="Phospholipase A2, PLA2"/>
    <property type="match status" value="1"/>
</dbReference>
<dbReference type="PROSITE" id="PS00119">
    <property type="entry name" value="PA2_ASP"/>
    <property type="match status" value="1"/>
</dbReference>
<dbReference type="PROSITE" id="PS00118">
    <property type="entry name" value="PA2_HIS"/>
    <property type="match status" value="1"/>
</dbReference>
<proteinExistence type="evidence at protein level"/>
<keyword id="KW-0903">Direct protein sequencing</keyword>
<keyword id="KW-1015">Disulfide bond</keyword>
<keyword id="KW-0959">Myotoxin</keyword>
<keyword id="KW-0964">Secreted</keyword>
<keyword id="KW-0732">Signal</keyword>
<keyword id="KW-0800">Toxin</keyword>
<evidence type="ECO:0000250" key="1">
    <source>
        <dbReference type="UniProtKB" id="I6L8L6"/>
    </source>
</evidence>
<evidence type="ECO:0000250" key="2">
    <source>
        <dbReference type="UniProtKB" id="P24605"/>
    </source>
</evidence>
<evidence type="ECO:0000250" key="3">
    <source>
        <dbReference type="UniProtKB" id="Q90249"/>
    </source>
</evidence>
<evidence type="ECO:0000269" key="4">
    <source>
    </source>
</evidence>
<evidence type="ECO:0000303" key="5">
    <source>
    </source>
</evidence>
<evidence type="ECO:0000305" key="6"/>
<evidence type="ECO:0000305" key="7">
    <source>
    </source>
</evidence>
<comment type="function">
    <text evidence="1 4">Snake venom phospholipase A2 homolog that lacks catalytic activity (PubMed:15955061). It induces local edema (PubMed:15955061). Is myotoxic (By similarity). A model of myotoxic mechanism has been proposed: an apo Lys49-PLA2 is activated by the entrance of a hydrophobic molecule (e.g. fatty acid) at the hydrophobic channel of the protein leading to a reorientation of a monomer (By similarity). This reorientation causes a transition between 'inactive' to 'active' states, causing alignment of C-terminal and membrane-docking sites (MDoS) side-by-side and putting the membrane-disruption sites (MDiS) in the same plane, exposed to solvent and in a symmetric position for both monomers (By similarity). The MDoS region stabilizes the toxin on membrane by the interaction of charged residues with phospholipid head groups (By similarity). Subsequently, the MDiS region destabilizes the membrane with penetration of hydrophobic residues (By similarity). This insertion causes a disorganization of the membrane, allowing an uncontrolled influx of ions (i.e. calcium and sodium), and eventually triggering irreversible intracellular alterations and cell death (By similarity).</text>
</comment>
<comment type="subunit">
    <text evidence="4">Monomer.</text>
</comment>
<comment type="subcellular location">
    <subcellularLocation>
        <location evidence="4">Secreted</location>
    </subcellularLocation>
</comment>
<comment type="tissue specificity">
    <text evidence="7">Expressed by the venom gland.</text>
</comment>
<comment type="mass spectrometry" mass="14034.0" method="Electrospray" evidence="4"/>
<comment type="similarity">
    <text evidence="6">Belongs to the phospholipase A2 family. Group II subfamily. K49 sub-subfamily.</text>
</comment>
<comment type="caution">
    <text evidence="6">Does not bind calcium as one of the calcium-binding sites is lost (Asp-&gt;Lys in position 64, which corresponds to 'Lys-49' in the current nomenclature).</text>
</comment>
<protein>
    <recommendedName>
        <fullName evidence="5">Basic phospholipase A2 homolog Tbo-K49</fullName>
        <shortName>svPLA2 homolog</shortName>
    </recommendedName>
</protein>
<name>PA2HB_CRABR</name>
<sequence length="138" mass="15818">MRTLWIMAVLLVGVEGSVIELGKMILQETGKNPVTYYSAYGCNCGPLGRRKPLDATDRCCFMHKCCYKKLTDSNPIKDSYSYSWENKAIVCKEKNPRLKEMCECDKAVAICFRENMGTYNKKERINTKIFCKKTSEPC</sequence>
<feature type="signal peptide" evidence="4">
    <location>
        <begin position="1"/>
        <end position="16"/>
    </location>
</feature>
<feature type="chain" id="PRO_0000419057" description="Basic phospholipase A2 homolog Tbo-K49" evidence="7">
    <location>
        <begin position="17"/>
        <end position="138"/>
    </location>
</feature>
<feature type="region of interest" description="Important for membrane-damaging activities in eukaryotes and bacteria; heparin-binding" evidence="2">
    <location>
        <begin position="121"/>
        <end position="133"/>
    </location>
</feature>
<feature type="site" description="Important residue of the cationic membrane-docking site (MDoS)" evidence="1">
    <location>
        <position position="121"/>
    </location>
</feature>
<feature type="site" description="Important residue of the cationic membrane-docking site (MDoS)" evidence="1">
    <location>
        <position position="124"/>
    </location>
</feature>
<feature type="site" description="Cationic membrane-docking site (MDoS)" evidence="1">
    <location>
        <position position="128"/>
    </location>
</feature>
<feature type="site" description="Hydrophobic membrane-disruption site (MDiS)" evidence="1">
    <location>
        <position position="130"/>
    </location>
</feature>
<feature type="site" description="Cationic membrane-docking site (MDoS)" evidence="1">
    <location>
        <position position="133"/>
    </location>
</feature>
<feature type="disulfide bond" evidence="3">
    <location>
        <begin position="42"/>
        <end position="131"/>
    </location>
</feature>
<feature type="disulfide bond" evidence="3">
    <location>
        <begin position="44"/>
        <end position="60"/>
    </location>
</feature>
<feature type="disulfide bond" evidence="3">
    <location>
        <begin position="59"/>
        <end position="111"/>
    </location>
</feature>
<feature type="disulfide bond" evidence="3">
    <location>
        <begin position="65"/>
        <end position="138"/>
    </location>
</feature>
<feature type="disulfide bond" evidence="3">
    <location>
        <begin position="66"/>
        <end position="104"/>
    </location>
</feature>
<feature type="disulfide bond" evidence="3">
    <location>
        <begin position="91"/>
        <end position="102"/>
    </location>
</feature>
<accession>Q2YHJ4</accession>
<reference key="1">
    <citation type="journal article" date="2005" name="FEBS J.">
        <title>Unusual venom phospholipases A2 of two primitive tree vipers Trimeresurus puniceus and Trimeresurus borneensis.</title>
        <authorList>
            <person name="Wang Y.-M."/>
            <person name="Peng H.-F."/>
            <person name="Tsai I.-H."/>
        </authorList>
    </citation>
    <scope>NUCLEOTIDE SEQUENCE [MRNA]</scope>
    <scope>PROTEIN SEQUENCE OF 17-39</scope>
    <scope>FUNCTION</scope>
    <scope>SUBUNIT</scope>
    <scope>MASS SPECTROMETRY</scope>
    <scope>SUBCELLULAR LOCATION</scope>
    <source>
        <tissue>Venom</tissue>
        <tissue>Venom gland</tissue>
    </source>
</reference>